<reference key="1">
    <citation type="journal article" date="2004" name="Genes Genet. Syst.">
        <title>Nonconcerted evolution of histone 3 genes in a liverwort, Conocephalum conicum.</title>
        <authorList>
            <person name="Kim H.N."/>
            <person name="Yamazaki T."/>
        </authorList>
    </citation>
    <scope>NUCLEOTIDE SEQUENCE [GENOMIC DNA]</scope>
    <source>
        <tissue>Thallus</tissue>
    </source>
</reference>
<comment type="function">
    <text>Core component of nucleosome. Nucleosomes wrap and compact DNA into chromatin, limiting DNA accessibility to the cellular machineries which require DNA as a template. Histones thereby play a central role in transcription regulation, DNA repair, DNA replication and chromosomal stability. DNA accessibility is regulated via a complex set of post-translational modifications of histones, also called histone code, and nucleosome remodeling.</text>
</comment>
<comment type="subunit">
    <text>The nucleosome is a histone octamer containing two molecules each of H2A, H2B, H3 and H4 assembled in one H3-H4 heterotetramer and two H2A-H2B heterodimers. The octamer wraps approximately 147 bp of DNA.</text>
</comment>
<comment type="subcellular location">
    <subcellularLocation>
        <location evidence="1">Nucleus</location>
    </subcellularLocation>
    <subcellularLocation>
        <location evidence="1">Chromosome</location>
    </subcellularLocation>
</comment>
<comment type="PTM">
    <text evidence="1">Acetylation is generally linked to gene activation. Can be acetylated to form H3K9ac, H3K14ac, H3K18ac and H3K23ac. H3K9ac could compete with H3K9me and prevent gene silencing. H3K9ac is restricted to euchromatin (By similarity).</text>
</comment>
<comment type="PTM">
    <text evidence="1">Methylated to form mainly H3K4me, H3K9me, H3K18me, H3K23me, H3K27me and H3K36me. H3K4me1/2/3, H3K9me3, H3K27me3 and H3K36me1/2/3 are typical marks for euchromatin, whereas heterochromatic chromocenters are enriched in H3K9me1/2 and H3K27me1/2. H2BK143ub1 is probably prerequisite for H3K4me (By similarity).</text>
</comment>
<comment type="PTM">
    <text evidence="1">Can be phosphorylated to form H3S10ph, H3T11ph and H3S28ph.</text>
</comment>
<comment type="similarity">
    <text evidence="3">Belongs to the histone H3 family.</text>
</comment>
<comment type="caution">
    <text evidence="3">To ensure consistency between histone entries, we follow the 'Brno' nomenclature for histone modifications, with positions referring to those used in the literature for the 'closest' model organism. Due to slight variations in histone sequences between organisms and to the presence of initiator methionine in UniProtKB/Swiss-Prot sequences, the actual positions of modified amino acids in the sequence generally differ. In this entry the following conventions are used: H3K4me = methylated Lys-5; H3K9ac = acetylated Lys-10; H3K9me = methylated Lys-10; H3S10ph = phosphorylated Ser-11; H3T11ph = phosphorylated Thr-12; H3K14ac = acetylated Lys-15; H3K18ac = acetylated Lys-19; H3K18me = methylated Lys-19; H3K23ac = acetylated Lys-24; H3K23me = methylated Lys-24; H3K27me = methylated Lys-28; H3S28ph = phosphorylated Ser-29; H3K36me = methylated Lys-37.</text>
</comment>
<dbReference type="EMBL" id="AB185062">
    <property type="protein sequence ID" value="BAD90793.1"/>
    <property type="molecule type" value="Genomic_DNA"/>
</dbReference>
<dbReference type="EMBL" id="AB185063">
    <property type="protein sequence ID" value="BAD90794.1"/>
    <property type="molecule type" value="Genomic_DNA"/>
</dbReference>
<dbReference type="EMBL" id="AB185064">
    <property type="protein sequence ID" value="BAD90795.1"/>
    <property type="molecule type" value="Genomic_DNA"/>
</dbReference>
<dbReference type="EMBL" id="AB185065">
    <property type="protein sequence ID" value="BAD90796.1"/>
    <property type="molecule type" value="Genomic_DNA"/>
</dbReference>
<dbReference type="EMBL" id="AB185066">
    <property type="protein sequence ID" value="BAD90797.1"/>
    <property type="molecule type" value="Genomic_DNA"/>
</dbReference>
<dbReference type="SMR" id="Q5DWI3"/>
<dbReference type="GO" id="GO:0000786">
    <property type="term" value="C:nucleosome"/>
    <property type="evidence" value="ECO:0007669"/>
    <property type="project" value="UniProtKB-KW"/>
</dbReference>
<dbReference type="GO" id="GO:0005634">
    <property type="term" value="C:nucleus"/>
    <property type="evidence" value="ECO:0007669"/>
    <property type="project" value="UniProtKB-SubCell"/>
</dbReference>
<dbReference type="GO" id="GO:0003677">
    <property type="term" value="F:DNA binding"/>
    <property type="evidence" value="ECO:0007669"/>
    <property type="project" value="UniProtKB-KW"/>
</dbReference>
<dbReference type="GO" id="GO:0046982">
    <property type="term" value="F:protein heterodimerization activity"/>
    <property type="evidence" value="ECO:0007669"/>
    <property type="project" value="InterPro"/>
</dbReference>
<dbReference type="GO" id="GO:0030527">
    <property type="term" value="F:structural constituent of chromatin"/>
    <property type="evidence" value="ECO:0007669"/>
    <property type="project" value="InterPro"/>
</dbReference>
<dbReference type="CDD" id="cd22911">
    <property type="entry name" value="HFD_H3"/>
    <property type="match status" value="1"/>
</dbReference>
<dbReference type="FunFam" id="1.10.20.10:FF:000010">
    <property type="entry name" value="Histone H3"/>
    <property type="match status" value="1"/>
</dbReference>
<dbReference type="Gene3D" id="1.10.20.10">
    <property type="entry name" value="Histone, subunit A"/>
    <property type="match status" value="1"/>
</dbReference>
<dbReference type="InterPro" id="IPR009072">
    <property type="entry name" value="Histone-fold"/>
</dbReference>
<dbReference type="InterPro" id="IPR007125">
    <property type="entry name" value="Histone_H2A/H2B/H3"/>
</dbReference>
<dbReference type="InterPro" id="IPR000164">
    <property type="entry name" value="Histone_H3/CENP-A"/>
</dbReference>
<dbReference type="PANTHER" id="PTHR11426">
    <property type="entry name" value="HISTONE H3"/>
    <property type="match status" value="1"/>
</dbReference>
<dbReference type="Pfam" id="PF00125">
    <property type="entry name" value="Histone"/>
    <property type="match status" value="1"/>
</dbReference>
<dbReference type="PRINTS" id="PR00622">
    <property type="entry name" value="HISTONEH3"/>
</dbReference>
<dbReference type="SMART" id="SM00428">
    <property type="entry name" value="H3"/>
    <property type="match status" value="1"/>
</dbReference>
<dbReference type="SUPFAM" id="SSF47113">
    <property type="entry name" value="Histone-fold"/>
    <property type="match status" value="1"/>
</dbReference>
<dbReference type="PROSITE" id="PS00322">
    <property type="entry name" value="HISTONE_H3_1"/>
    <property type="match status" value="1"/>
</dbReference>
<dbReference type="PROSITE" id="PS00959">
    <property type="entry name" value="HISTONE_H3_2"/>
    <property type="match status" value="1"/>
</dbReference>
<organism>
    <name type="scientific">Marchantia polymorpha</name>
    <name type="common">Common liverwort</name>
    <name type="synonym">Marchantia aquatica</name>
    <dbReference type="NCBI Taxonomy" id="3197"/>
    <lineage>
        <taxon>Eukaryota</taxon>
        <taxon>Viridiplantae</taxon>
        <taxon>Streptophyta</taxon>
        <taxon>Embryophyta</taxon>
        <taxon>Marchantiophyta</taxon>
        <taxon>Marchantiopsida</taxon>
        <taxon>Marchantiidae</taxon>
        <taxon>Marchantiales</taxon>
        <taxon>Marchantiaceae</taxon>
        <taxon>Marchantia</taxon>
    </lineage>
</organism>
<proteinExistence type="inferred from homology"/>
<evidence type="ECO:0000250" key="1"/>
<evidence type="ECO:0000256" key="2">
    <source>
        <dbReference type="SAM" id="MobiDB-lite"/>
    </source>
</evidence>
<evidence type="ECO:0000305" key="3"/>
<protein>
    <recommendedName>
        <fullName>Histone H3</fullName>
    </recommendedName>
</protein>
<accession>Q5DWI3</accession>
<name>H3_MARPO</name>
<keyword id="KW-0007">Acetylation</keyword>
<keyword id="KW-0158">Chromosome</keyword>
<keyword id="KW-0238">DNA-binding</keyword>
<keyword id="KW-0488">Methylation</keyword>
<keyword id="KW-0544">Nucleosome core</keyword>
<keyword id="KW-0539">Nucleus</keyword>
<keyword id="KW-0597">Phosphoprotein</keyword>
<feature type="initiator methionine" description="Removed" evidence="1">
    <location>
        <position position="1"/>
    </location>
</feature>
<feature type="chain" id="PRO_0000221283" description="Histone H3">
    <location>
        <begin position="2"/>
        <end position="136"/>
    </location>
</feature>
<feature type="region of interest" description="Disordered" evidence="2">
    <location>
        <begin position="1"/>
        <end position="43"/>
    </location>
</feature>
<feature type="modified residue" description="N6-methylated lysine" evidence="1">
    <location>
        <position position="5"/>
    </location>
</feature>
<feature type="modified residue" description="N6-acetyllysine; alternate" evidence="1">
    <location>
        <position position="10"/>
    </location>
</feature>
<feature type="modified residue" description="N6-methylated lysine; alternate" evidence="1">
    <location>
        <position position="10"/>
    </location>
</feature>
<feature type="modified residue" description="Phosphoserine" evidence="1">
    <location>
        <position position="11"/>
    </location>
</feature>
<feature type="modified residue" description="Phosphothreonine" evidence="1">
    <location>
        <position position="12"/>
    </location>
</feature>
<feature type="modified residue" description="N6-acetyllysine" evidence="1">
    <location>
        <position position="15"/>
    </location>
</feature>
<feature type="modified residue" description="N6-acetyllysine; alternate" evidence="1">
    <location>
        <position position="19"/>
    </location>
</feature>
<feature type="modified residue" description="N6-methylated lysine; alternate" evidence="1">
    <location>
        <position position="19"/>
    </location>
</feature>
<feature type="modified residue" description="N6-acetyllysine; alternate" evidence="1">
    <location>
        <position position="24"/>
    </location>
</feature>
<feature type="modified residue" description="N6-methylated lysine; alternate" evidence="1">
    <location>
        <position position="24"/>
    </location>
</feature>
<feature type="modified residue" description="N6-methylated lysine" evidence="1">
    <location>
        <position position="28"/>
    </location>
</feature>
<feature type="modified residue" description="Phosphoserine" evidence="1">
    <location>
        <position position="29"/>
    </location>
</feature>
<feature type="modified residue" description="N6-methylated lysine" evidence="1">
    <location>
        <position position="37"/>
    </location>
</feature>
<sequence length="136" mass="15392">MARTKQTARKSTGGKAPRKQLASKAARKSAPSTGGVKKPHRYKPGTVALREIRRYQKSTELLIRKLPFQRLVREIAQDFKSDLRFQSSAIGALQESVESYLVSLFEDTNLCAIHAKRVTIQSKDIQLARRLRGERN</sequence>